<keyword id="KW-1003">Cell membrane</keyword>
<keyword id="KW-0472">Membrane</keyword>
<keyword id="KW-1185">Reference proteome</keyword>
<keyword id="KW-0812">Transmembrane</keyword>
<keyword id="KW-1133">Transmembrane helix</keyword>
<sequence length="362" mass="39046">MATSQTKELPRPQLFTVMTRYIPGLVLTGVITGLALNVGDMPWFINMGLGALTLAILFGIIVGNTLYPWLQPVCSDGVVYAKQYLLRLGIILYGFRLTFQQVADVGATGMVIDLLTLSSTFILACWLGKRVFGLDQQTVMLIGAGSSICGAAAIMATEPVLKADASKVAVAVATVVIFGTLAIFVYPWLYQLNLHYQWLPFSQETFGIFAGSTIHEVAQVVAAGHAIGPDAENAAVITKMIRVMMLAPFLLLLSAYLGRSRIKTSGEKREKSAITIPWFAVIFILMAGFNSLNLLPAVWVNHLITLDTILLAMAMAALGLTTHIGSIRQAGVKPLLLALLLFIWLLVGGTGINLFVQHIALV</sequence>
<gene>
    <name type="ordered locus">YPO1307</name>
    <name type="ordered locus">y2878</name>
    <name type="ordered locus">YP_1285</name>
</gene>
<name>Y1307_YERPE</name>
<reference key="1">
    <citation type="journal article" date="2001" name="Nature">
        <title>Genome sequence of Yersinia pestis, the causative agent of plague.</title>
        <authorList>
            <person name="Parkhill J."/>
            <person name="Wren B.W."/>
            <person name="Thomson N.R."/>
            <person name="Titball R.W."/>
            <person name="Holden M.T.G."/>
            <person name="Prentice M.B."/>
            <person name="Sebaihia M."/>
            <person name="James K.D."/>
            <person name="Churcher C.M."/>
            <person name="Mungall K.L."/>
            <person name="Baker S."/>
            <person name="Basham D."/>
            <person name="Bentley S.D."/>
            <person name="Brooks K."/>
            <person name="Cerdeno-Tarraga A.-M."/>
            <person name="Chillingworth T."/>
            <person name="Cronin A."/>
            <person name="Davies R.M."/>
            <person name="Davis P."/>
            <person name="Dougan G."/>
            <person name="Feltwell T."/>
            <person name="Hamlin N."/>
            <person name="Holroyd S."/>
            <person name="Jagels K."/>
            <person name="Karlyshev A.V."/>
            <person name="Leather S."/>
            <person name="Moule S."/>
            <person name="Oyston P.C.F."/>
            <person name="Quail M.A."/>
            <person name="Rutherford K.M."/>
            <person name="Simmonds M."/>
            <person name="Skelton J."/>
            <person name="Stevens K."/>
            <person name="Whitehead S."/>
            <person name="Barrell B.G."/>
        </authorList>
    </citation>
    <scope>NUCLEOTIDE SEQUENCE [LARGE SCALE GENOMIC DNA]</scope>
    <source>
        <strain>CO-92 / Biovar Orientalis</strain>
    </source>
</reference>
<reference key="2">
    <citation type="journal article" date="2002" name="J. Bacteriol.">
        <title>Genome sequence of Yersinia pestis KIM.</title>
        <authorList>
            <person name="Deng W."/>
            <person name="Burland V."/>
            <person name="Plunkett G. III"/>
            <person name="Boutin A."/>
            <person name="Mayhew G.F."/>
            <person name="Liss P."/>
            <person name="Perna N.T."/>
            <person name="Rose D.J."/>
            <person name="Mau B."/>
            <person name="Zhou S."/>
            <person name="Schwartz D.C."/>
            <person name="Fetherston J.D."/>
            <person name="Lindler L.E."/>
            <person name="Brubaker R.R."/>
            <person name="Plano G.V."/>
            <person name="Straley S.C."/>
            <person name="McDonough K.A."/>
            <person name="Nilles M.L."/>
            <person name="Matson J.S."/>
            <person name="Blattner F.R."/>
            <person name="Perry R.D."/>
        </authorList>
    </citation>
    <scope>NUCLEOTIDE SEQUENCE [LARGE SCALE GENOMIC DNA]</scope>
    <source>
        <strain>KIM10+ / Biovar Mediaevalis</strain>
    </source>
</reference>
<reference key="3">
    <citation type="journal article" date="2004" name="DNA Res.">
        <title>Complete genome sequence of Yersinia pestis strain 91001, an isolate avirulent to humans.</title>
        <authorList>
            <person name="Song Y."/>
            <person name="Tong Z."/>
            <person name="Wang J."/>
            <person name="Wang L."/>
            <person name="Guo Z."/>
            <person name="Han Y."/>
            <person name="Zhang J."/>
            <person name="Pei D."/>
            <person name="Zhou D."/>
            <person name="Qin H."/>
            <person name="Pang X."/>
            <person name="Han Y."/>
            <person name="Zhai J."/>
            <person name="Li M."/>
            <person name="Cui B."/>
            <person name="Qi Z."/>
            <person name="Jin L."/>
            <person name="Dai R."/>
            <person name="Chen F."/>
            <person name="Li S."/>
            <person name="Ye C."/>
            <person name="Du Z."/>
            <person name="Lin W."/>
            <person name="Wang J."/>
            <person name="Yu J."/>
            <person name="Yang H."/>
            <person name="Wang J."/>
            <person name="Huang P."/>
            <person name="Yang R."/>
        </authorList>
    </citation>
    <scope>NUCLEOTIDE SEQUENCE [LARGE SCALE GENOMIC DNA]</scope>
    <source>
        <strain>91001 / Biovar Mediaevalis</strain>
    </source>
</reference>
<dbReference type="EMBL" id="AL590842">
    <property type="protein sequence ID" value="CAL19960.1"/>
    <property type="molecule type" value="Genomic_DNA"/>
</dbReference>
<dbReference type="EMBL" id="AE009952">
    <property type="protein sequence ID" value="AAM86429.1"/>
    <property type="status" value="ALT_INIT"/>
    <property type="molecule type" value="Genomic_DNA"/>
</dbReference>
<dbReference type="EMBL" id="AE017042">
    <property type="protein sequence ID" value="AAS61528.1"/>
    <property type="status" value="ALT_INIT"/>
    <property type="molecule type" value="Genomic_DNA"/>
</dbReference>
<dbReference type="PIR" id="AF0159">
    <property type="entry name" value="AF0159"/>
</dbReference>
<dbReference type="RefSeq" id="WP_002208790.1">
    <property type="nucleotide sequence ID" value="NZ_WUCM01000013.1"/>
</dbReference>
<dbReference type="RefSeq" id="YP_002346332.1">
    <property type="nucleotide sequence ID" value="NC_003143.1"/>
</dbReference>
<dbReference type="STRING" id="214092.YPO1307"/>
<dbReference type="PaxDb" id="214092-YPO1307"/>
<dbReference type="DNASU" id="1147825"/>
<dbReference type="EnsemblBacteria" id="AAS61528">
    <property type="protein sequence ID" value="AAS61528"/>
    <property type="gene ID" value="YP_1285"/>
</dbReference>
<dbReference type="KEGG" id="ype:YPO1307"/>
<dbReference type="KEGG" id="ypk:y2878"/>
<dbReference type="KEGG" id="ypm:YP_1285"/>
<dbReference type="PATRIC" id="fig|214092.21.peg.1617"/>
<dbReference type="eggNOG" id="COG2855">
    <property type="taxonomic scope" value="Bacteria"/>
</dbReference>
<dbReference type="HOGENOM" id="CLU_033541_0_0_6"/>
<dbReference type="OMA" id="LTRALWI"/>
<dbReference type="OrthoDB" id="9805703at2"/>
<dbReference type="Proteomes" id="UP000000815">
    <property type="component" value="Chromosome"/>
</dbReference>
<dbReference type="Proteomes" id="UP000001019">
    <property type="component" value="Chromosome"/>
</dbReference>
<dbReference type="Proteomes" id="UP000002490">
    <property type="component" value="Chromosome"/>
</dbReference>
<dbReference type="GO" id="GO:0005886">
    <property type="term" value="C:plasma membrane"/>
    <property type="evidence" value="ECO:0000318"/>
    <property type="project" value="GO_Central"/>
</dbReference>
<dbReference type="InterPro" id="IPR018383">
    <property type="entry name" value="UPF0324_pro"/>
</dbReference>
<dbReference type="InterPro" id="IPR004630">
    <property type="entry name" value="UPF0324_YeiH-like"/>
</dbReference>
<dbReference type="NCBIfam" id="TIGR00698">
    <property type="entry name" value="YeiH family putative sulfate export transporter"/>
    <property type="match status" value="1"/>
</dbReference>
<dbReference type="PANTHER" id="PTHR30106">
    <property type="entry name" value="INNER MEMBRANE PROTEIN YEIH-RELATED"/>
    <property type="match status" value="1"/>
</dbReference>
<dbReference type="PANTHER" id="PTHR30106:SF2">
    <property type="entry name" value="UPF0324 INNER MEMBRANE PROTEIN YEIH"/>
    <property type="match status" value="1"/>
</dbReference>
<dbReference type="Pfam" id="PF03601">
    <property type="entry name" value="Cons_hypoth698"/>
    <property type="match status" value="1"/>
</dbReference>
<proteinExistence type="inferred from homology"/>
<accession>Q8ZGJ0</accession>
<accession>Q0WHA6</accession>
<accession>Q74VL3</accession>
<accession>Q8D026</accession>
<organism>
    <name type="scientific">Yersinia pestis</name>
    <dbReference type="NCBI Taxonomy" id="632"/>
    <lineage>
        <taxon>Bacteria</taxon>
        <taxon>Pseudomonadati</taxon>
        <taxon>Pseudomonadota</taxon>
        <taxon>Gammaproteobacteria</taxon>
        <taxon>Enterobacterales</taxon>
        <taxon>Yersiniaceae</taxon>
        <taxon>Yersinia</taxon>
    </lineage>
</organism>
<evidence type="ECO:0000255" key="1"/>
<evidence type="ECO:0000305" key="2"/>
<comment type="subcellular location">
    <subcellularLocation>
        <location evidence="2">Cell membrane</location>
        <topology evidence="2">Multi-pass membrane protein</topology>
    </subcellularLocation>
</comment>
<comment type="similarity">
    <text evidence="2">Belongs to the UPF0324 family.</text>
</comment>
<comment type="sequence caution" evidence="2">
    <conflict type="erroneous initiation">
        <sequence resource="EMBL-CDS" id="AAM86429"/>
    </conflict>
</comment>
<comment type="sequence caution" evidence="2">
    <conflict type="erroneous initiation">
        <sequence resource="EMBL-CDS" id="AAS61528"/>
    </conflict>
</comment>
<protein>
    <recommendedName>
        <fullName>UPF0324 membrane protein YPO1307/y2878/YP_1285</fullName>
    </recommendedName>
</protein>
<feature type="chain" id="PRO_0000157472" description="UPF0324 membrane protein YPO1307/y2878/YP_1285">
    <location>
        <begin position="1"/>
        <end position="362"/>
    </location>
</feature>
<feature type="transmembrane region" description="Helical" evidence="1">
    <location>
        <begin position="21"/>
        <end position="38"/>
    </location>
</feature>
<feature type="transmembrane region" description="Helical" evidence="1">
    <location>
        <begin position="48"/>
        <end position="70"/>
    </location>
</feature>
<feature type="transmembrane region" description="Helical" evidence="1">
    <location>
        <begin position="102"/>
        <end position="124"/>
    </location>
</feature>
<feature type="transmembrane region" description="Helical" evidence="1">
    <location>
        <begin position="139"/>
        <end position="161"/>
    </location>
</feature>
<feature type="transmembrane region" description="Helical" evidence="1">
    <location>
        <begin position="168"/>
        <end position="190"/>
    </location>
</feature>
<feature type="transmembrane region" description="Helical" evidence="1">
    <location>
        <begin position="240"/>
        <end position="257"/>
    </location>
</feature>
<feature type="transmembrane region" description="Helical" evidence="1">
    <location>
        <begin position="278"/>
        <end position="300"/>
    </location>
</feature>
<feature type="transmembrane region" description="Helical" evidence="1">
    <location>
        <begin position="305"/>
        <end position="327"/>
    </location>
</feature>
<feature type="transmembrane region" description="Helical" evidence="1">
    <location>
        <begin position="334"/>
        <end position="356"/>
    </location>
</feature>